<protein>
    <recommendedName>
        <fullName>Nuclear protein localization protein 4 homolog</fullName>
    </recommendedName>
</protein>
<accession>Q54GD3</accession>
<name>NPL4_DICDI</name>
<reference key="1">
    <citation type="journal article" date="2005" name="Nature">
        <title>The genome of the social amoeba Dictyostelium discoideum.</title>
        <authorList>
            <person name="Eichinger L."/>
            <person name="Pachebat J.A."/>
            <person name="Gloeckner G."/>
            <person name="Rajandream M.A."/>
            <person name="Sucgang R."/>
            <person name="Berriman M."/>
            <person name="Song J."/>
            <person name="Olsen R."/>
            <person name="Szafranski K."/>
            <person name="Xu Q."/>
            <person name="Tunggal B."/>
            <person name="Kummerfeld S."/>
            <person name="Madera M."/>
            <person name="Konfortov B.A."/>
            <person name="Rivero F."/>
            <person name="Bankier A.T."/>
            <person name="Lehmann R."/>
            <person name="Hamlin N."/>
            <person name="Davies R."/>
            <person name="Gaudet P."/>
            <person name="Fey P."/>
            <person name="Pilcher K."/>
            <person name="Chen G."/>
            <person name="Saunders D."/>
            <person name="Sodergren E.J."/>
            <person name="Davis P."/>
            <person name="Kerhornou A."/>
            <person name="Nie X."/>
            <person name="Hall N."/>
            <person name="Anjard C."/>
            <person name="Hemphill L."/>
            <person name="Bason N."/>
            <person name="Farbrother P."/>
            <person name="Desany B."/>
            <person name="Just E."/>
            <person name="Morio T."/>
            <person name="Rost R."/>
            <person name="Churcher C.M."/>
            <person name="Cooper J."/>
            <person name="Haydock S."/>
            <person name="van Driessche N."/>
            <person name="Cronin A."/>
            <person name="Goodhead I."/>
            <person name="Muzny D.M."/>
            <person name="Mourier T."/>
            <person name="Pain A."/>
            <person name="Lu M."/>
            <person name="Harper D."/>
            <person name="Lindsay R."/>
            <person name="Hauser H."/>
            <person name="James K.D."/>
            <person name="Quiles M."/>
            <person name="Madan Babu M."/>
            <person name="Saito T."/>
            <person name="Buchrieser C."/>
            <person name="Wardroper A."/>
            <person name="Felder M."/>
            <person name="Thangavelu M."/>
            <person name="Johnson D."/>
            <person name="Knights A."/>
            <person name="Loulseged H."/>
            <person name="Mungall K.L."/>
            <person name="Oliver K."/>
            <person name="Price C."/>
            <person name="Quail M.A."/>
            <person name="Urushihara H."/>
            <person name="Hernandez J."/>
            <person name="Rabbinowitsch E."/>
            <person name="Steffen D."/>
            <person name="Sanders M."/>
            <person name="Ma J."/>
            <person name="Kohara Y."/>
            <person name="Sharp S."/>
            <person name="Simmonds M.N."/>
            <person name="Spiegler S."/>
            <person name="Tivey A."/>
            <person name="Sugano S."/>
            <person name="White B."/>
            <person name="Walker D."/>
            <person name="Woodward J.R."/>
            <person name="Winckler T."/>
            <person name="Tanaka Y."/>
            <person name="Shaulsky G."/>
            <person name="Schleicher M."/>
            <person name="Weinstock G.M."/>
            <person name="Rosenthal A."/>
            <person name="Cox E.C."/>
            <person name="Chisholm R.L."/>
            <person name="Gibbs R.A."/>
            <person name="Loomis W.F."/>
            <person name="Platzer M."/>
            <person name="Kay R.R."/>
            <person name="Williams J.G."/>
            <person name="Dear P.H."/>
            <person name="Noegel A.A."/>
            <person name="Barrell B.G."/>
            <person name="Kuspa A."/>
        </authorList>
    </citation>
    <scope>NUCLEOTIDE SEQUENCE [LARGE SCALE GENOMIC DNA]</scope>
    <source>
        <strain>AX4</strain>
    </source>
</reference>
<proteinExistence type="inferred from homology"/>
<organism>
    <name type="scientific">Dictyostelium discoideum</name>
    <name type="common">Social amoeba</name>
    <dbReference type="NCBI Taxonomy" id="44689"/>
    <lineage>
        <taxon>Eukaryota</taxon>
        <taxon>Amoebozoa</taxon>
        <taxon>Evosea</taxon>
        <taxon>Eumycetozoa</taxon>
        <taxon>Dictyostelia</taxon>
        <taxon>Dictyosteliales</taxon>
        <taxon>Dictyosteliaceae</taxon>
        <taxon>Dictyostelium</taxon>
    </lineage>
</organism>
<gene>
    <name type="primary">nploc4</name>
    <name type="synonym">npl4</name>
    <name type="ORF">DDB_G0290227</name>
</gene>
<evidence type="ECO:0000250" key="1"/>
<evidence type="ECO:0000255" key="2">
    <source>
        <dbReference type="PROSITE-ProRule" id="PRU01182"/>
    </source>
</evidence>
<evidence type="ECO:0000256" key="3">
    <source>
        <dbReference type="SAM" id="MobiDB-lite"/>
    </source>
</evidence>
<evidence type="ECO:0000305" key="4"/>
<dbReference type="EMBL" id="AAFI02000161">
    <property type="protein sequence ID" value="EAL62335.1"/>
    <property type="molecule type" value="Genomic_DNA"/>
</dbReference>
<dbReference type="RefSeq" id="XP_635845.1">
    <property type="nucleotide sequence ID" value="XM_630753.1"/>
</dbReference>
<dbReference type="SMR" id="Q54GD3"/>
<dbReference type="FunCoup" id="Q54GD3">
    <property type="interactions" value="514"/>
</dbReference>
<dbReference type="STRING" id="44689.Q54GD3"/>
<dbReference type="PaxDb" id="44689-DDB0233722"/>
<dbReference type="EnsemblProtists" id="EAL62335">
    <property type="protein sequence ID" value="EAL62335"/>
    <property type="gene ID" value="DDB_G0290227"/>
</dbReference>
<dbReference type="GeneID" id="8627553"/>
<dbReference type="KEGG" id="ddi:DDB_G0290227"/>
<dbReference type="dictyBase" id="DDB_G0290227">
    <property type="gene designation" value="npl4"/>
</dbReference>
<dbReference type="VEuPathDB" id="AmoebaDB:DDB_G0290227"/>
<dbReference type="eggNOG" id="KOG2834">
    <property type="taxonomic scope" value="Eukaryota"/>
</dbReference>
<dbReference type="HOGENOM" id="CLU_473653_0_0_1"/>
<dbReference type="InParanoid" id="Q54GD3"/>
<dbReference type="OMA" id="RVGWIFS"/>
<dbReference type="PhylomeDB" id="Q54GD3"/>
<dbReference type="Reactome" id="R-DDI-8951664">
    <property type="pathway name" value="Neddylation"/>
</dbReference>
<dbReference type="Reactome" id="R-DDI-9755511">
    <property type="pathway name" value="KEAP1-NFE2L2 pathway"/>
</dbReference>
<dbReference type="UniPathway" id="UPA00144"/>
<dbReference type="PRO" id="PR:Q54GD3"/>
<dbReference type="Proteomes" id="UP000002195">
    <property type="component" value="Chromosome 5"/>
</dbReference>
<dbReference type="GO" id="GO:0005783">
    <property type="term" value="C:endoplasmic reticulum"/>
    <property type="evidence" value="ECO:0000250"/>
    <property type="project" value="dictyBase"/>
</dbReference>
<dbReference type="GO" id="GO:0042175">
    <property type="term" value="C:nuclear outer membrane-endoplasmic reticulum membrane network"/>
    <property type="evidence" value="ECO:0000250"/>
    <property type="project" value="dictyBase"/>
</dbReference>
<dbReference type="GO" id="GO:0005634">
    <property type="term" value="C:nucleus"/>
    <property type="evidence" value="ECO:0000318"/>
    <property type="project" value="GO_Central"/>
</dbReference>
<dbReference type="GO" id="GO:0043130">
    <property type="term" value="F:ubiquitin binding"/>
    <property type="evidence" value="ECO:0000318"/>
    <property type="project" value="GO_Central"/>
</dbReference>
<dbReference type="GO" id="GO:0031625">
    <property type="term" value="F:ubiquitin protein ligase binding"/>
    <property type="evidence" value="ECO:0000318"/>
    <property type="project" value="GO_Central"/>
</dbReference>
<dbReference type="GO" id="GO:0043161">
    <property type="term" value="P:proteasome-mediated ubiquitin-dependent protein catabolic process"/>
    <property type="evidence" value="ECO:0007669"/>
    <property type="project" value="UniProtKB-UniPathway"/>
</dbReference>
<dbReference type="GO" id="GO:0030970">
    <property type="term" value="P:retrograde protein transport, ER to cytosol"/>
    <property type="evidence" value="ECO:0000250"/>
    <property type="project" value="dictyBase"/>
</dbReference>
<dbReference type="GO" id="GO:0006511">
    <property type="term" value="P:ubiquitin-dependent protein catabolic process"/>
    <property type="evidence" value="ECO:0000318"/>
    <property type="project" value="GO_Central"/>
</dbReference>
<dbReference type="CDD" id="cd08061">
    <property type="entry name" value="MPN_NPL4"/>
    <property type="match status" value="1"/>
</dbReference>
<dbReference type="FunFam" id="3.40.140.10:FF:000161">
    <property type="entry name" value="Nuclear protein localization protein 4 homolog"/>
    <property type="match status" value="1"/>
</dbReference>
<dbReference type="Gene3D" id="3.40.140.10">
    <property type="entry name" value="Cytidine Deaminase, domain 2"/>
    <property type="match status" value="1"/>
</dbReference>
<dbReference type="Gene3D" id="3.10.20.90">
    <property type="entry name" value="Phosphatidylinositol 3-kinase Catalytic Subunit, Chain A, domain 1"/>
    <property type="match status" value="1"/>
</dbReference>
<dbReference type="InterPro" id="IPR037518">
    <property type="entry name" value="MPN"/>
</dbReference>
<dbReference type="InterPro" id="IPR016563">
    <property type="entry name" value="Npl4"/>
</dbReference>
<dbReference type="InterPro" id="IPR007717">
    <property type="entry name" value="NPL4_C"/>
</dbReference>
<dbReference type="InterPro" id="IPR029071">
    <property type="entry name" value="Ubiquitin-like_domsf"/>
</dbReference>
<dbReference type="PANTHER" id="PTHR12710">
    <property type="entry name" value="NUCLEAR PROTEIN LOCALIZATION 4"/>
    <property type="match status" value="1"/>
</dbReference>
<dbReference type="PANTHER" id="PTHR12710:SF0">
    <property type="entry name" value="NUCLEAR PROTEIN LOCALIZATION PROTEIN 4 HOMOLOG"/>
    <property type="match status" value="1"/>
</dbReference>
<dbReference type="Pfam" id="PF05021">
    <property type="entry name" value="NPL4"/>
    <property type="match status" value="2"/>
</dbReference>
<dbReference type="SUPFAM" id="SSF102712">
    <property type="entry name" value="JAB1/MPN domain"/>
    <property type="match status" value="1"/>
</dbReference>
<dbReference type="SUPFAM" id="SSF54236">
    <property type="entry name" value="Ubiquitin-like"/>
    <property type="match status" value="1"/>
</dbReference>
<dbReference type="PROSITE" id="PS50249">
    <property type="entry name" value="MPN"/>
    <property type="match status" value="1"/>
</dbReference>
<sequence length="576" mass="64399">MIIAVRSPSGTTKINVSDTAIVKDLYVKLKENNVDIDGKSITKTPRDPPLEVGDKLSSLGIKSGDLLHLVGNNNNNNNDNKASSGSNNNNNNNNISKKEISYDEKLPNGLTPRCKHAVGDKCVFCSDAQGMKRCDHPENATCPNCQNKKFKGKRLKWLCNHPAGGKCSNCLRVGKNVSYKCNHGSTATCVNCMDKDDEDQDDNEEDNKDNKDNSEIKKSGFVPKVAIKNEVKTKCLHGPNQKCINCLPKDDPNSIEVPKRRCKNHGINGSCVECIEWRESLKMRLKSQDNPHAPGALVDFQSANIFQQYIANSKYEQQRIGFLFGNFLSDGSVVVDSIYEPPQECKDKQTPTLLPDPLADKIESMASMLGLTRVGWIFSHPSRKYTMSSTEIIQAASYQNKYGPSFVTLILSVNSDGQSNMEAFQVSDQALKLEKTGEFLPTQPDPTKCKLKSPVFEEGTETINADTHFFIVTVPLKAREDKSIFNISFPVENRIPVNTLSDLASYKLEHKDVSPLKFFSDFHFLIFLLENQFLDFQSDFPIICENIRSRSSENLIGYLEIINYQIGDIIGHDQFN</sequence>
<feature type="chain" id="PRO_0000339458" description="Nuclear protein localization protein 4 homolog">
    <location>
        <begin position="1"/>
        <end position="576"/>
    </location>
</feature>
<feature type="domain" description="MPN" evidence="2">
    <location>
        <begin position="295"/>
        <end position="430"/>
    </location>
</feature>
<feature type="region of interest" description="Disordered" evidence="3">
    <location>
        <begin position="67"/>
        <end position="96"/>
    </location>
</feature>
<feature type="region of interest" description="Disordered" evidence="3">
    <location>
        <begin position="200"/>
        <end position="219"/>
    </location>
</feature>
<feature type="compositionally biased region" description="Low complexity" evidence="3">
    <location>
        <begin position="72"/>
        <end position="94"/>
    </location>
</feature>
<feature type="compositionally biased region" description="Basic and acidic residues" evidence="3">
    <location>
        <begin position="208"/>
        <end position="218"/>
    </location>
</feature>
<keyword id="KW-1185">Reference proteome</keyword>
<keyword id="KW-0833">Ubl conjugation pathway</keyword>
<comment type="function">
    <text evidence="1">May be part of a complex that binds ubiquitinated proteins and that is necessary for the export of misfolded proteins from the ER to the cytoplasm, where they are degraded by the proteasome.</text>
</comment>
<comment type="pathway">
    <text>Protein degradation; proteasomal ubiquitin-dependent pathway.</text>
</comment>
<comment type="similarity">
    <text evidence="4">Belongs to the NPL4 family.</text>
</comment>